<dbReference type="EC" id="7.1.2.2" evidence="1"/>
<dbReference type="EMBL" id="AE017282">
    <property type="protein sequence ID" value="AAU90745.1"/>
    <property type="molecule type" value="Genomic_DNA"/>
</dbReference>
<dbReference type="SMR" id="Q60CR6"/>
<dbReference type="STRING" id="243233.MCA0010"/>
<dbReference type="KEGG" id="mca:MCA0010"/>
<dbReference type="eggNOG" id="COG0056">
    <property type="taxonomic scope" value="Bacteria"/>
</dbReference>
<dbReference type="HOGENOM" id="CLU_010091_2_1_6"/>
<dbReference type="Proteomes" id="UP000006821">
    <property type="component" value="Chromosome"/>
</dbReference>
<dbReference type="GO" id="GO:0005886">
    <property type="term" value="C:plasma membrane"/>
    <property type="evidence" value="ECO:0007669"/>
    <property type="project" value="UniProtKB-SubCell"/>
</dbReference>
<dbReference type="GO" id="GO:0045259">
    <property type="term" value="C:proton-transporting ATP synthase complex"/>
    <property type="evidence" value="ECO:0007669"/>
    <property type="project" value="UniProtKB-KW"/>
</dbReference>
<dbReference type="GO" id="GO:0043531">
    <property type="term" value="F:ADP binding"/>
    <property type="evidence" value="ECO:0007669"/>
    <property type="project" value="TreeGrafter"/>
</dbReference>
<dbReference type="GO" id="GO:0005524">
    <property type="term" value="F:ATP binding"/>
    <property type="evidence" value="ECO:0007669"/>
    <property type="project" value="UniProtKB-UniRule"/>
</dbReference>
<dbReference type="GO" id="GO:0046933">
    <property type="term" value="F:proton-transporting ATP synthase activity, rotational mechanism"/>
    <property type="evidence" value="ECO:0007669"/>
    <property type="project" value="UniProtKB-UniRule"/>
</dbReference>
<dbReference type="CDD" id="cd18113">
    <property type="entry name" value="ATP-synt_F1_alpha_C"/>
    <property type="match status" value="1"/>
</dbReference>
<dbReference type="CDD" id="cd18116">
    <property type="entry name" value="ATP-synt_F1_alpha_N"/>
    <property type="match status" value="1"/>
</dbReference>
<dbReference type="CDD" id="cd01132">
    <property type="entry name" value="F1-ATPase_alpha_CD"/>
    <property type="match status" value="1"/>
</dbReference>
<dbReference type="FunFam" id="1.20.150.20:FF:000001">
    <property type="entry name" value="ATP synthase subunit alpha"/>
    <property type="match status" value="1"/>
</dbReference>
<dbReference type="FunFam" id="2.40.30.20:FF:000001">
    <property type="entry name" value="ATP synthase subunit alpha"/>
    <property type="match status" value="1"/>
</dbReference>
<dbReference type="FunFam" id="3.40.50.300:FF:000002">
    <property type="entry name" value="ATP synthase subunit alpha"/>
    <property type="match status" value="1"/>
</dbReference>
<dbReference type="Gene3D" id="2.40.30.20">
    <property type="match status" value="1"/>
</dbReference>
<dbReference type="Gene3D" id="1.20.150.20">
    <property type="entry name" value="ATP synthase alpha/beta chain, C-terminal domain"/>
    <property type="match status" value="1"/>
</dbReference>
<dbReference type="Gene3D" id="3.40.50.300">
    <property type="entry name" value="P-loop containing nucleotide triphosphate hydrolases"/>
    <property type="match status" value="1"/>
</dbReference>
<dbReference type="HAMAP" id="MF_01346">
    <property type="entry name" value="ATP_synth_alpha_bact"/>
    <property type="match status" value="1"/>
</dbReference>
<dbReference type="InterPro" id="IPR023366">
    <property type="entry name" value="ATP_synth_asu-like_sf"/>
</dbReference>
<dbReference type="InterPro" id="IPR000793">
    <property type="entry name" value="ATP_synth_asu_C"/>
</dbReference>
<dbReference type="InterPro" id="IPR038376">
    <property type="entry name" value="ATP_synth_asu_C_sf"/>
</dbReference>
<dbReference type="InterPro" id="IPR033732">
    <property type="entry name" value="ATP_synth_F1_a_nt-bd_dom"/>
</dbReference>
<dbReference type="InterPro" id="IPR005294">
    <property type="entry name" value="ATP_synth_F1_asu"/>
</dbReference>
<dbReference type="InterPro" id="IPR020003">
    <property type="entry name" value="ATPase_a/bsu_AS"/>
</dbReference>
<dbReference type="InterPro" id="IPR004100">
    <property type="entry name" value="ATPase_F1/V1/A1_a/bsu_N"/>
</dbReference>
<dbReference type="InterPro" id="IPR036121">
    <property type="entry name" value="ATPase_F1/V1/A1_a/bsu_N_sf"/>
</dbReference>
<dbReference type="InterPro" id="IPR000194">
    <property type="entry name" value="ATPase_F1/V1/A1_a/bsu_nucl-bd"/>
</dbReference>
<dbReference type="InterPro" id="IPR027417">
    <property type="entry name" value="P-loop_NTPase"/>
</dbReference>
<dbReference type="NCBIfam" id="TIGR00962">
    <property type="entry name" value="atpA"/>
    <property type="match status" value="1"/>
</dbReference>
<dbReference type="NCBIfam" id="NF009884">
    <property type="entry name" value="PRK13343.1"/>
    <property type="match status" value="1"/>
</dbReference>
<dbReference type="PANTHER" id="PTHR48082">
    <property type="entry name" value="ATP SYNTHASE SUBUNIT ALPHA, MITOCHONDRIAL"/>
    <property type="match status" value="1"/>
</dbReference>
<dbReference type="PANTHER" id="PTHR48082:SF2">
    <property type="entry name" value="ATP SYNTHASE SUBUNIT ALPHA, MITOCHONDRIAL"/>
    <property type="match status" value="1"/>
</dbReference>
<dbReference type="Pfam" id="PF00006">
    <property type="entry name" value="ATP-synt_ab"/>
    <property type="match status" value="1"/>
</dbReference>
<dbReference type="Pfam" id="PF00306">
    <property type="entry name" value="ATP-synt_ab_C"/>
    <property type="match status" value="1"/>
</dbReference>
<dbReference type="Pfam" id="PF02874">
    <property type="entry name" value="ATP-synt_ab_N"/>
    <property type="match status" value="1"/>
</dbReference>
<dbReference type="PIRSF" id="PIRSF039088">
    <property type="entry name" value="F_ATPase_subunit_alpha"/>
    <property type="match status" value="1"/>
</dbReference>
<dbReference type="SUPFAM" id="SSF47917">
    <property type="entry name" value="C-terminal domain of alpha and beta subunits of F1 ATP synthase"/>
    <property type="match status" value="1"/>
</dbReference>
<dbReference type="SUPFAM" id="SSF50615">
    <property type="entry name" value="N-terminal domain of alpha and beta subunits of F1 ATP synthase"/>
    <property type="match status" value="1"/>
</dbReference>
<dbReference type="SUPFAM" id="SSF52540">
    <property type="entry name" value="P-loop containing nucleoside triphosphate hydrolases"/>
    <property type="match status" value="1"/>
</dbReference>
<dbReference type="PROSITE" id="PS00152">
    <property type="entry name" value="ATPASE_ALPHA_BETA"/>
    <property type="match status" value="1"/>
</dbReference>
<sequence length="513" mass="55470">MQLNASEISDLIKQRIGKFDLGVESRSEGTIVSLTDGIVRIHGLQDVMQGEMVEFPGNTYGMALNLERDSVGAVVLGSYEHLSEGDTAKCTGRILEVPVGEALLGRVVDALGNPIDGAGPIDAKLFSPIEKIAPGVISRQSVSQPLQTGLKAIDSMIPVGRGQRELIIGDRQTGKTAIAIDAIINQKGTGVKCIYVAVGQKQSSIANVVRKLQEHGAMEHTIVVSASASESAALQFIAPYAGCAMGEYFRDRGEDALIVYDDLTKQAWAYRQISLLLRRPPGREAYPGDVFYLHSRLLERASRINAEEVERLTKGEVKGKTGSLTALPIIETQAGDVSAFVPTNVISITDGQIFLETNLFNAGIRPAVNAGLSVSRVGGAAQTKVIKKLGGGIRLDLAQYRELAAFAQFASDLDEATRKQIERGQRVTELMKQNQYSPMSIAQMAVSLFAANEGYLDDIEVSKVRDFEDALQEYMKSQCAELLKSIDATGDYNDAIQAGLHEAIKKFKATHAW</sequence>
<organism>
    <name type="scientific">Methylococcus capsulatus (strain ATCC 33009 / NCIMB 11132 / Bath)</name>
    <dbReference type="NCBI Taxonomy" id="243233"/>
    <lineage>
        <taxon>Bacteria</taxon>
        <taxon>Pseudomonadati</taxon>
        <taxon>Pseudomonadota</taxon>
        <taxon>Gammaproteobacteria</taxon>
        <taxon>Methylococcales</taxon>
        <taxon>Methylococcaceae</taxon>
        <taxon>Methylococcus</taxon>
    </lineage>
</organism>
<accession>Q60CR6</accession>
<reference key="1">
    <citation type="journal article" date="2004" name="PLoS Biol.">
        <title>Genomic insights into methanotrophy: the complete genome sequence of Methylococcus capsulatus (Bath).</title>
        <authorList>
            <person name="Ward N.L."/>
            <person name="Larsen O."/>
            <person name="Sakwa J."/>
            <person name="Bruseth L."/>
            <person name="Khouri H.M."/>
            <person name="Durkin A.S."/>
            <person name="Dimitrov G."/>
            <person name="Jiang L."/>
            <person name="Scanlan D."/>
            <person name="Kang K.H."/>
            <person name="Lewis M.R."/>
            <person name="Nelson K.E."/>
            <person name="Methe B.A."/>
            <person name="Wu M."/>
            <person name="Heidelberg J.F."/>
            <person name="Paulsen I.T."/>
            <person name="Fouts D.E."/>
            <person name="Ravel J."/>
            <person name="Tettelin H."/>
            <person name="Ren Q."/>
            <person name="Read T.D."/>
            <person name="DeBoy R.T."/>
            <person name="Seshadri R."/>
            <person name="Salzberg S.L."/>
            <person name="Jensen H.B."/>
            <person name="Birkeland N.K."/>
            <person name="Nelson W.C."/>
            <person name="Dodson R.J."/>
            <person name="Grindhaug S.H."/>
            <person name="Holt I.E."/>
            <person name="Eidhammer I."/>
            <person name="Jonasen I."/>
            <person name="Vanaken S."/>
            <person name="Utterback T.R."/>
            <person name="Feldblyum T.V."/>
            <person name="Fraser C.M."/>
            <person name="Lillehaug J.R."/>
            <person name="Eisen J.A."/>
        </authorList>
    </citation>
    <scope>NUCLEOTIDE SEQUENCE [LARGE SCALE GENOMIC DNA]</scope>
    <source>
        <strain>ATCC 33009 / NCIMB 11132 / Bath</strain>
    </source>
</reference>
<name>ATPA1_METCA</name>
<feature type="chain" id="PRO_0000238287" description="ATP synthase subunit alpha 1">
    <location>
        <begin position="1"/>
        <end position="513"/>
    </location>
</feature>
<feature type="binding site" evidence="1">
    <location>
        <begin position="169"/>
        <end position="176"/>
    </location>
    <ligand>
        <name>ATP</name>
        <dbReference type="ChEBI" id="CHEBI:30616"/>
    </ligand>
</feature>
<feature type="site" description="Required for activity" evidence="1">
    <location>
        <position position="373"/>
    </location>
</feature>
<gene>
    <name evidence="1" type="primary">atpA1</name>
    <name type="synonym">atpA-1</name>
    <name type="ordered locus">MCA0010</name>
</gene>
<comment type="function">
    <text evidence="1">Produces ATP from ADP in the presence of a proton gradient across the membrane. The alpha chain is a regulatory subunit.</text>
</comment>
<comment type="catalytic activity">
    <reaction evidence="1">
        <text>ATP + H2O + 4 H(+)(in) = ADP + phosphate + 5 H(+)(out)</text>
        <dbReference type="Rhea" id="RHEA:57720"/>
        <dbReference type="ChEBI" id="CHEBI:15377"/>
        <dbReference type="ChEBI" id="CHEBI:15378"/>
        <dbReference type="ChEBI" id="CHEBI:30616"/>
        <dbReference type="ChEBI" id="CHEBI:43474"/>
        <dbReference type="ChEBI" id="CHEBI:456216"/>
        <dbReference type="EC" id="7.1.2.2"/>
    </reaction>
</comment>
<comment type="subunit">
    <text evidence="1">F-type ATPases have 2 components, CF(1) - the catalytic core - and CF(0) - the membrane proton channel. CF(1) has five subunits: alpha(3), beta(3), gamma(1), delta(1), epsilon(1). CF(0) has three main subunits: a(1), b(2) and c(9-12). The alpha and beta chains form an alternating ring which encloses part of the gamma chain. CF(1) is attached to CF(0) by a central stalk formed by the gamma and epsilon chains, while a peripheral stalk is formed by the delta and b chains.</text>
</comment>
<comment type="subcellular location">
    <subcellularLocation>
        <location evidence="1">Cell inner membrane</location>
        <topology evidence="1">Peripheral membrane protein</topology>
    </subcellularLocation>
</comment>
<comment type="similarity">
    <text evidence="1">Belongs to the ATPase alpha/beta chains family.</text>
</comment>
<keyword id="KW-0066">ATP synthesis</keyword>
<keyword id="KW-0067">ATP-binding</keyword>
<keyword id="KW-0997">Cell inner membrane</keyword>
<keyword id="KW-1003">Cell membrane</keyword>
<keyword id="KW-0139">CF(1)</keyword>
<keyword id="KW-0375">Hydrogen ion transport</keyword>
<keyword id="KW-0406">Ion transport</keyword>
<keyword id="KW-0472">Membrane</keyword>
<keyword id="KW-0547">Nucleotide-binding</keyword>
<keyword id="KW-1185">Reference proteome</keyword>
<keyword id="KW-1278">Translocase</keyword>
<keyword id="KW-0813">Transport</keyword>
<proteinExistence type="inferred from homology"/>
<evidence type="ECO:0000255" key="1">
    <source>
        <dbReference type="HAMAP-Rule" id="MF_01346"/>
    </source>
</evidence>
<protein>
    <recommendedName>
        <fullName evidence="1">ATP synthase subunit alpha 1</fullName>
        <ecNumber evidence="1">7.1.2.2</ecNumber>
    </recommendedName>
    <alternativeName>
        <fullName evidence="1">ATP synthase F1 sector subunit alpha 1</fullName>
    </alternativeName>
    <alternativeName>
        <fullName evidence="1">F-ATPase subunit alpha 1</fullName>
    </alternativeName>
</protein>